<reference key="1">
    <citation type="journal article" date="2008" name="Genomics">
        <title>Evolution in the laboratory: the genome of Halobacterium salinarum strain R1 compared to that of strain NRC-1.</title>
        <authorList>
            <person name="Pfeiffer F."/>
            <person name="Schuster S.C."/>
            <person name="Broicher A."/>
            <person name="Falb M."/>
            <person name="Palm P."/>
            <person name="Rodewald K."/>
            <person name="Ruepp A."/>
            <person name="Soppa J."/>
            <person name="Tittor J."/>
            <person name="Oesterhelt D."/>
        </authorList>
    </citation>
    <scope>NUCLEOTIDE SEQUENCE [LARGE SCALE GENOMIC DNA]</scope>
    <source>
        <strain>ATCC 29341 / DSM 671 / R1</strain>
    </source>
</reference>
<dbReference type="EC" id="4.3.3.6" evidence="1"/>
<dbReference type="EC" id="3.5.1.2" evidence="1"/>
<dbReference type="EMBL" id="AM774415">
    <property type="protein sequence ID" value="CAP14948.1"/>
    <property type="molecule type" value="Genomic_DNA"/>
</dbReference>
<dbReference type="RefSeq" id="WP_010903941.1">
    <property type="nucleotide sequence ID" value="NC_010364.1"/>
</dbReference>
<dbReference type="SMR" id="B0R879"/>
<dbReference type="MEROPS" id="C26.A32"/>
<dbReference type="EnsemblBacteria" id="CAP14948">
    <property type="protein sequence ID" value="CAP14948"/>
    <property type="gene ID" value="OE_4644R"/>
</dbReference>
<dbReference type="GeneID" id="89348582"/>
<dbReference type="KEGG" id="hsl:OE_4644R"/>
<dbReference type="HOGENOM" id="CLU_069674_2_0_2"/>
<dbReference type="PhylomeDB" id="B0R879"/>
<dbReference type="UniPathway" id="UPA00245"/>
<dbReference type="Proteomes" id="UP000001321">
    <property type="component" value="Chromosome"/>
</dbReference>
<dbReference type="GO" id="GO:0005829">
    <property type="term" value="C:cytosol"/>
    <property type="evidence" value="ECO:0007669"/>
    <property type="project" value="TreeGrafter"/>
</dbReference>
<dbReference type="GO" id="GO:1903600">
    <property type="term" value="C:glutaminase complex"/>
    <property type="evidence" value="ECO:0007669"/>
    <property type="project" value="TreeGrafter"/>
</dbReference>
<dbReference type="GO" id="GO:0004359">
    <property type="term" value="F:glutaminase activity"/>
    <property type="evidence" value="ECO:0007669"/>
    <property type="project" value="UniProtKB-UniRule"/>
</dbReference>
<dbReference type="GO" id="GO:0036381">
    <property type="term" value="F:pyridoxal 5'-phosphate synthase (glutamine hydrolysing) activity"/>
    <property type="evidence" value="ECO:0007669"/>
    <property type="project" value="UniProtKB-UniRule"/>
</dbReference>
<dbReference type="GO" id="GO:0006543">
    <property type="term" value="P:glutamine catabolic process"/>
    <property type="evidence" value="ECO:0007669"/>
    <property type="project" value="UniProtKB-UniRule"/>
</dbReference>
<dbReference type="GO" id="GO:0042823">
    <property type="term" value="P:pyridoxal phosphate biosynthetic process"/>
    <property type="evidence" value="ECO:0007669"/>
    <property type="project" value="UniProtKB-UniRule"/>
</dbReference>
<dbReference type="GO" id="GO:0008614">
    <property type="term" value="P:pyridoxine metabolic process"/>
    <property type="evidence" value="ECO:0007669"/>
    <property type="project" value="TreeGrafter"/>
</dbReference>
<dbReference type="CDD" id="cd01749">
    <property type="entry name" value="GATase1_PB"/>
    <property type="match status" value="1"/>
</dbReference>
<dbReference type="FunFam" id="3.40.50.880:FF:000010">
    <property type="entry name" value="uncharacterized protein LOC100176842 isoform X2"/>
    <property type="match status" value="1"/>
</dbReference>
<dbReference type="Gene3D" id="3.40.50.880">
    <property type="match status" value="1"/>
</dbReference>
<dbReference type="HAMAP" id="MF_01615">
    <property type="entry name" value="PdxT"/>
    <property type="match status" value="1"/>
</dbReference>
<dbReference type="InterPro" id="IPR029062">
    <property type="entry name" value="Class_I_gatase-like"/>
</dbReference>
<dbReference type="InterPro" id="IPR002161">
    <property type="entry name" value="PdxT/SNO"/>
</dbReference>
<dbReference type="InterPro" id="IPR021196">
    <property type="entry name" value="PdxT/SNO_CS"/>
</dbReference>
<dbReference type="NCBIfam" id="TIGR03800">
    <property type="entry name" value="PLP_synth_Pdx2"/>
    <property type="match status" value="1"/>
</dbReference>
<dbReference type="PANTHER" id="PTHR31559">
    <property type="entry name" value="PYRIDOXAL 5'-PHOSPHATE SYNTHASE SUBUNIT SNO"/>
    <property type="match status" value="1"/>
</dbReference>
<dbReference type="PANTHER" id="PTHR31559:SF0">
    <property type="entry name" value="PYRIDOXAL 5'-PHOSPHATE SYNTHASE SUBUNIT SNO1-RELATED"/>
    <property type="match status" value="1"/>
</dbReference>
<dbReference type="Pfam" id="PF01174">
    <property type="entry name" value="SNO"/>
    <property type="match status" value="1"/>
</dbReference>
<dbReference type="PIRSF" id="PIRSF005639">
    <property type="entry name" value="Glut_amidoT_SNO"/>
    <property type="match status" value="1"/>
</dbReference>
<dbReference type="SUPFAM" id="SSF52317">
    <property type="entry name" value="Class I glutamine amidotransferase-like"/>
    <property type="match status" value="1"/>
</dbReference>
<dbReference type="PROSITE" id="PS01236">
    <property type="entry name" value="PDXT_SNO_1"/>
    <property type="match status" value="1"/>
</dbReference>
<dbReference type="PROSITE" id="PS51130">
    <property type="entry name" value="PDXT_SNO_2"/>
    <property type="match status" value="1"/>
</dbReference>
<gene>
    <name evidence="1" type="primary">pdxT</name>
    <name type="ordered locus">OE_4644R</name>
</gene>
<proteinExistence type="inferred from homology"/>
<name>PDXT_HALS3</name>
<comment type="function">
    <text evidence="1">Catalyzes the hydrolysis of glutamine to glutamate and ammonia as part of the biosynthesis of pyridoxal 5'-phosphate. The resulting ammonia molecule is channeled to the active site of PdxS.</text>
</comment>
<comment type="catalytic activity">
    <reaction evidence="1">
        <text>aldehydo-D-ribose 5-phosphate + D-glyceraldehyde 3-phosphate + L-glutamine = pyridoxal 5'-phosphate + L-glutamate + phosphate + 3 H2O + H(+)</text>
        <dbReference type="Rhea" id="RHEA:31507"/>
        <dbReference type="ChEBI" id="CHEBI:15377"/>
        <dbReference type="ChEBI" id="CHEBI:15378"/>
        <dbReference type="ChEBI" id="CHEBI:29985"/>
        <dbReference type="ChEBI" id="CHEBI:43474"/>
        <dbReference type="ChEBI" id="CHEBI:58273"/>
        <dbReference type="ChEBI" id="CHEBI:58359"/>
        <dbReference type="ChEBI" id="CHEBI:59776"/>
        <dbReference type="ChEBI" id="CHEBI:597326"/>
        <dbReference type="EC" id="4.3.3.6"/>
    </reaction>
</comment>
<comment type="catalytic activity">
    <reaction evidence="1">
        <text>L-glutamine + H2O = L-glutamate + NH4(+)</text>
        <dbReference type="Rhea" id="RHEA:15889"/>
        <dbReference type="ChEBI" id="CHEBI:15377"/>
        <dbReference type="ChEBI" id="CHEBI:28938"/>
        <dbReference type="ChEBI" id="CHEBI:29985"/>
        <dbReference type="ChEBI" id="CHEBI:58359"/>
        <dbReference type="EC" id="3.5.1.2"/>
    </reaction>
</comment>
<comment type="pathway">
    <text evidence="1">Cofactor biosynthesis; pyridoxal 5'-phosphate biosynthesis.</text>
</comment>
<comment type="subunit">
    <text evidence="1">In the presence of PdxS, forms a dodecamer of heterodimers. Only shows activity in the heterodimer.</text>
</comment>
<comment type="similarity">
    <text evidence="1">Belongs to the glutaminase PdxT/SNO family.</text>
</comment>
<feature type="chain" id="PRO_0000335574" description="Pyridoxal 5'-phosphate synthase subunit PdxT">
    <location>
        <begin position="1"/>
        <end position="203"/>
    </location>
</feature>
<feature type="active site" description="Nucleophile" evidence="1">
    <location>
        <position position="86"/>
    </location>
</feature>
<feature type="active site" description="Charge relay system" evidence="1">
    <location>
        <position position="177"/>
    </location>
</feature>
<feature type="active site" description="Charge relay system" evidence="1">
    <location>
        <position position="179"/>
    </location>
</feature>
<feature type="binding site" evidence="1">
    <location>
        <begin position="54"/>
        <end position="56"/>
    </location>
    <ligand>
        <name>L-glutamine</name>
        <dbReference type="ChEBI" id="CHEBI:58359"/>
    </ligand>
</feature>
<feature type="binding site" evidence="1">
    <location>
        <position position="113"/>
    </location>
    <ligand>
        <name>L-glutamine</name>
        <dbReference type="ChEBI" id="CHEBI:58359"/>
    </ligand>
</feature>
<feature type="binding site" evidence="1">
    <location>
        <begin position="141"/>
        <end position="142"/>
    </location>
    <ligand>
        <name>L-glutamine</name>
        <dbReference type="ChEBI" id="CHEBI:58359"/>
    </ligand>
</feature>
<keyword id="KW-0315">Glutamine amidotransferase</keyword>
<keyword id="KW-0378">Hydrolase</keyword>
<keyword id="KW-0456">Lyase</keyword>
<keyword id="KW-0663">Pyridoxal phosphate</keyword>
<sequence length="203" mass="21238">MTLTAGVVAVQGDVSEHAAAIRRAADAHGQPADVREIRTAGVVPECDVLLLPGGESTAISRLLDREGIDAEIRSHVAAGKPLLATCAGLIVSSTDANDDRVETLDVLDVTVDRNAFGRQVDSFEAPLDVDGLADPFPAVFIRAPVIDEVGADATVLASWDGRPVAIRDGPVVATSFHPELTADVRLHELAFFDRTPSAQAGDA</sequence>
<accession>B0R879</accession>
<protein>
    <recommendedName>
        <fullName evidence="1">Pyridoxal 5'-phosphate synthase subunit PdxT</fullName>
        <ecNumber evidence="1">4.3.3.6</ecNumber>
    </recommendedName>
    <alternativeName>
        <fullName evidence="1">Pdx2</fullName>
    </alternativeName>
    <alternativeName>
        <fullName evidence="1">Pyridoxal 5'-phosphate synthase glutaminase subunit</fullName>
        <ecNumber evidence="1">3.5.1.2</ecNumber>
    </alternativeName>
</protein>
<organism>
    <name type="scientific">Halobacterium salinarum (strain ATCC 29341 / DSM 671 / R1)</name>
    <dbReference type="NCBI Taxonomy" id="478009"/>
    <lineage>
        <taxon>Archaea</taxon>
        <taxon>Methanobacteriati</taxon>
        <taxon>Methanobacteriota</taxon>
        <taxon>Stenosarchaea group</taxon>
        <taxon>Halobacteria</taxon>
        <taxon>Halobacteriales</taxon>
        <taxon>Halobacteriaceae</taxon>
        <taxon>Halobacterium</taxon>
        <taxon>Halobacterium salinarum NRC-34001</taxon>
    </lineage>
</organism>
<evidence type="ECO:0000255" key="1">
    <source>
        <dbReference type="HAMAP-Rule" id="MF_01615"/>
    </source>
</evidence>